<reference key="1">
    <citation type="journal article" date="1985" name="Biol. Chem. Hoppe-Seyler">
        <title>Primary structure of the hemoglobins from the greater Kudu antelope (Tragelaphus strepsiceros).</title>
        <authorList>
            <person name="Rodewald K."/>
            <person name="Wiesner H."/>
            <person name="Braunitzer G."/>
        </authorList>
    </citation>
    <scope>PROTEIN SEQUENCE</scope>
</reference>
<sequence>LSAADKGHVKAAWGKVGSHAAEYGAEALERMFLSFPTTKTYFPHFDLSHGSAQVKGHGAKVAAALTKAVDHLDDLPGALSDLSDLHAHKLRVDPVNFKLLSHSLLVTLASHLPGDFTPAVHASLDKFLANVSTVLTSKYR</sequence>
<protein>
    <recommendedName>
        <fullName>Hemoglobin subunit alpha</fullName>
    </recommendedName>
    <alternativeName>
        <fullName>Alpha-globin</fullName>
    </alternativeName>
    <alternativeName>
        <fullName>Hemoglobin alpha chain</fullName>
    </alternativeName>
    <component>
        <recommendedName>
            <fullName evidence="2">Hemopressin</fullName>
        </recommendedName>
    </component>
</protein>
<keyword id="KW-0007">Acetylation</keyword>
<keyword id="KW-0903">Direct protein sequencing</keyword>
<keyword id="KW-0349">Heme</keyword>
<keyword id="KW-0408">Iron</keyword>
<keyword id="KW-0479">Metal-binding</keyword>
<keyword id="KW-0561">Oxygen transport</keyword>
<keyword id="KW-0597">Phosphoprotein</keyword>
<keyword id="KW-0813">Transport</keyword>
<proteinExistence type="evidence at protein level"/>
<name>HBA_TRAST</name>
<gene>
    <name type="primary">HBA</name>
</gene>
<evidence type="ECO:0000250" key="1">
    <source>
        <dbReference type="UniProtKB" id="P01942"/>
    </source>
</evidence>
<evidence type="ECO:0000250" key="2">
    <source>
        <dbReference type="UniProtKB" id="P01946"/>
    </source>
</evidence>
<evidence type="ECO:0000250" key="3">
    <source>
        <dbReference type="UniProtKB" id="P69905"/>
    </source>
</evidence>
<evidence type="ECO:0000255" key="4">
    <source>
        <dbReference type="PROSITE-ProRule" id="PRU00238"/>
    </source>
</evidence>
<organism>
    <name type="scientific">Tragelaphus strepsiceros</name>
    <name type="common">Greater kudu</name>
    <dbReference type="NCBI Taxonomy" id="9946"/>
    <lineage>
        <taxon>Eukaryota</taxon>
        <taxon>Metazoa</taxon>
        <taxon>Chordata</taxon>
        <taxon>Craniata</taxon>
        <taxon>Vertebrata</taxon>
        <taxon>Euteleostomi</taxon>
        <taxon>Mammalia</taxon>
        <taxon>Eutheria</taxon>
        <taxon>Laurasiatheria</taxon>
        <taxon>Artiodactyla</taxon>
        <taxon>Ruminantia</taxon>
        <taxon>Pecora</taxon>
        <taxon>Bovidae</taxon>
        <taxon>Bovinae</taxon>
        <taxon>Tragelaphus</taxon>
    </lineage>
</organism>
<feature type="chain" id="PRO_0000052786" description="Hemoglobin subunit alpha">
    <location>
        <begin position="1"/>
        <end position="140"/>
    </location>
</feature>
<feature type="peptide" id="PRO_0000455953" description="Hemopressin" evidence="2">
    <location>
        <begin position="94"/>
        <end position="102"/>
    </location>
</feature>
<feature type="domain" description="Globin" evidence="4">
    <location>
        <begin position="1"/>
        <end position="140"/>
    </location>
</feature>
<feature type="binding site" evidence="4">
    <location>
        <position position="57"/>
    </location>
    <ligand>
        <name>O2</name>
        <dbReference type="ChEBI" id="CHEBI:15379"/>
    </ligand>
</feature>
<feature type="binding site" description="proximal binding residue" evidence="4">
    <location>
        <position position="86"/>
    </location>
    <ligand>
        <name>heme b</name>
        <dbReference type="ChEBI" id="CHEBI:60344"/>
    </ligand>
    <ligandPart>
        <name>Fe</name>
        <dbReference type="ChEBI" id="CHEBI:18248"/>
    </ligandPart>
</feature>
<feature type="modified residue" description="Phosphoserine" evidence="3">
    <location>
        <position position="2"/>
    </location>
</feature>
<feature type="modified residue" description="N6-succinyllysine" evidence="1">
    <location>
        <position position="6"/>
    </location>
</feature>
<feature type="modified residue" description="N6-succinyllysine" evidence="1">
    <location>
        <position position="10"/>
    </location>
</feature>
<feature type="modified residue" description="N6-acetyllysine; alternate" evidence="3">
    <location>
        <position position="15"/>
    </location>
</feature>
<feature type="modified residue" description="N6-succinyllysine; alternate" evidence="1">
    <location>
        <position position="15"/>
    </location>
</feature>
<feature type="modified residue" description="Phosphotyrosine" evidence="3">
    <location>
        <position position="23"/>
    </location>
</feature>
<feature type="modified residue" description="Phosphoserine" evidence="3">
    <location>
        <position position="34"/>
    </location>
</feature>
<feature type="modified residue" description="N6-succinyllysine" evidence="1">
    <location>
        <position position="39"/>
    </location>
</feature>
<feature type="modified residue" description="Phosphoserine" evidence="3">
    <location>
        <position position="48"/>
    </location>
</feature>
<feature type="modified residue" description="Phosphoserine" evidence="1">
    <location>
        <position position="101"/>
    </location>
</feature>
<feature type="modified residue" description="Phosphothreonine" evidence="1">
    <location>
        <position position="107"/>
    </location>
</feature>
<feature type="modified residue" description="Phosphoserine" evidence="1">
    <location>
        <position position="123"/>
    </location>
</feature>
<feature type="modified residue" description="Phosphothreonine" evidence="1">
    <location>
        <position position="133"/>
    </location>
</feature>
<feature type="modified residue" description="Phosphothreonine" evidence="1">
    <location>
        <position position="136"/>
    </location>
</feature>
<feature type="modified residue" description="Phosphoserine" evidence="1">
    <location>
        <position position="137"/>
    </location>
</feature>
<accession>P04237</accession>
<dbReference type="PIR" id="A02293">
    <property type="entry name" value="HABOKA"/>
</dbReference>
<dbReference type="BMRB" id="P04237"/>
<dbReference type="SMR" id="P04237"/>
<dbReference type="GO" id="GO:0072562">
    <property type="term" value="C:blood microparticle"/>
    <property type="evidence" value="ECO:0007669"/>
    <property type="project" value="TreeGrafter"/>
</dbReference>
<dbReference type="GO" id="GO:0031838">
    <property type="term" value="C:haptoglobin-hemoglobin complex"/>
    <property type="evidence" value="ECO:0007669"/>
    <property type="project" value="TreeGrafter"/>
</dbReference>
<dbReference type="GO" id="GO:0005833">
    <property type="term" value="C:hemoglobin complex"/>
    <property type="evidence" value="ECO:0007669"/>
    <property type="project" value="InterPro"/>
</dbReference>
<dbReference type="GO" id="GO:0031720">
    <property type="term" value="F:haptoglobin binding"/>
    <property type="evidence" value="ECO:0007669"/>
    <property type="project" value="TreeGrafter"/>
</dbReference>
<dbReference type="GO" id="GO:0020037">
    <property type="term" value="F:heme binding"/>
    <property type="evidence" value="ECO:0007669"/>
    <property type="project" value="InterPro"/>
</dbReference>
<dbReference type="GO" id="GO:0005506">
    <property type="term" value="F:iron ion binding"/>
    <property type="evidence" value="ECO:0007669"/>
    <property type="project" value="InterPro"/>
</dbReference>
<dbReference type="GO" id="GO:0043177">
    <property type="term" value="F:organic acid binding"/>
    <property type="evidence" value="ECO:0007669"/>
    <property type="project" value="TreeGrafter"/>
</dbReference>
<dbReference type="GO" id="GO:0019825">
    <property type="term" value="F:oxygen binding"/>
    <property type="evidence" value="ECO:0007669"/>
    <property type="project" value="InterPro"/>
</dbReference>
<dbReference type="GO" id="GO:0005344">
    <property type="term" value="F:oxygen carrier activity"/>
    <property type="evidence" value="ECO:0007669"/>
    <property type="project" value="UniProtKB-KW"/>
</dbReference>
<dbReference type="GO" id="GO:0004601">
    <property type="term" value="F:peroxidase activity"/>
    <property type="evidence" value="ECO:0007669"/>
    <property type="project" value="TreeGrafter"/>
</dbReference>
<dbReference type="GO" id="GO:0042744">
    <property type="term" value="P:hydrogen peroxide catabolic process"/>
    <property type="evidence" value="ECO:0007669"/>
    <property type="project" value="TreeGrafter"/>
</dbReference>
<dbReference type="CDD" id="cd08927">
    <property type="entry name" value="Hb-alpha-like"/>
    <property type="match status" value="1"/>
</dbReference>
<dbReference type="FunFam" id="1.10.490.10:FF:000002">
    <property type="entry name" value="Hemoglobin subunit alpha"/>
    <property type="match status" value="1"/>
</dbReference>
<dbReference type="Gene3D" id="1.10.490.10">
    <property type="entry name" value="Globins"/>
    <property type="match status" value="1"/>
</dbReference>
<dbReference type="InterPro" id="IPR000971">
    <property type="entry name" value="Globin"/>
</dbReference>
<dbReference type="InterPro" id="IPR009050">
    <property type="entry name" value="Globin-like_sf"/>
</dbReference>
<dbReference type="InterPro" id="IPR012292">
    <property type="entry name" value="Globin/Proto"/>
</dbReference>
<dbReference type="InterPro" id="IPR002338">
    <property type="entry name" value="Hemoglobin_a-typ"/>
</dbReference>
<dbReference type="InterPro" id="IPR050056">
    <property type="entry name" value="Hemoglobin_oxygen_transport"/>
</dbReference>
<dbReference type="InterPro" id="IPR002339">
    <property type="entry name" value="Hemoglobin_pi"/>
</dbReference>
<dbReference type="PANTHER" id="PTHR11442">
    <property type="entry name" value="HEMOGLOBIN FAMILY MEMBER"/>
    <property type="match status" value="1"/>
</dbReference>
<dbReference type="PANTHER" id="PTHR11442:SF48">
    <property type="entry name" value="HEMOGLOBIN SUBUNIT ALPHA"/>
    <property type="match status" value="1"/>
</dbReference>
<dbReference type="Pfam" id="PF00042">
    <property type="entry name" value="Globin"/>
    <property type="match status" value="1"/>
</dbReference>
<dbReference type="PRINTS" id="PR00612">
    <property type="entry name" value="ALPHAHAEM"/>
</dbReference>
<dbReference type="PRINTS" id="PR00815">
    <property type="entry name" value="PIHAEM"/>
</dbReference>
<dbReference type="SUPFAM" id="SSF46458">
    <property type="entry name" value="Globin-like"/>
    <property type="match status" value="1"/>
</dbReference>
<dbReference type="PROSITE" id="PS01033">
    <property type="entry name" value="GLOBIN"/>
    <property type="match status" value="1"/>
</dbReference>
<comment type="function">
    <text>Involved in oxygen transport from the lung to the various peripheral tissues.</text>
</comment>
<comment type="function">
    <molecule>Hemopressin</molecule>
    <text evidence="2">Hemopressin acts as an antagonist peptide of the cannabinoid receptor CNR1. Hemopressin-binding efficiently blocks cannabinoid receptor CNR1 and subsequent signaling.</text>
</comment>
<comment type="subunit">
    <text>Heterotetramer of two alpha chains and two beta chains.</text>
</comment>
<comment type="tissue specificity">
    <text>Red blood cells.</text>
</comment>
<comment type="similarity">
    <text evidence="4">Belongs to the globin family.</text>
</comment>